<feature type="chain" id="PRO_0000399271" description="Adenylosuccinate synthetase">
    <location>
        <begin position="1"/>
        <end position="426"/>
    </location>
</feature>
<feature type="active site" description="Proton acceptor" evidence="2">
    <location>
        <position position="19"/>
    </location>
</feature>
<feature type="active site" description="Proton donor" evidence="2">
    <location>
        <position position="47"/>
    </location>
</feature>
<feature type="binding site" evidence="2">
    <location>
        <begin position="18"/>
        <end position="24"/>
    </location>
    <ligand>
        <name>GTP</name>
        <dbReference type="ChEBI" id="CHEBI:37565"/>
    </ligand>
</feature>
<feature type="binding site" description="in other chain" evidence="2">
    <location>
        <begin position="19"/>
        <end position="22"/>
    </location>
    <ligand>
        <name>IMP</name>
        <dbReference type="ChEBI" id="CHEBI:58053"/>
        <note>ligand shared between dimeric partners</note>
    </ligand>
</feature>
<feature type="binding site" evidence="2">
    <location>
        <position position="19"/>
    </location>
    <ligand>
        <name>Mg(2+)</name>
        <dbReference type="ChEBI" id="CHEBI:18420"/>
    </ligand>
</feature>
<feature type="binding site" description="in other chain" evidence="2">
    <location>
        <begin position="44"/>
        <end position="47"/>
    </location>
    <ligand>
        <name>IMP</name>
        <dbReference type="ChEBI" id="CHEBI:58053"/>
        <note>ligand shared between dimeric partners</note>
    </ligand>
</feature>
<feature type="binding site" evidence="2">
    <location>
        <begin position="46"/>
        <end position="48"/>
    </location>
    <ligand>
        <name>GTP</name>
        <dbReference type="ChEBI" id="CHEBI:37565"/>
    </ligand>
</feature>
<feature type="binding site" evidence="2">
    <location>
        <position position="46"/>
    </location>
    <ligand>
        <name>Mg(2+)</name>
        <dbReference type="ChEBI" id="CHEBI:18420"/>
    </ligand>
</feature>
<feature type="binding site" description="in other chain" evidence="2">
    <location>
        <position position="136"/>
    </location>
    <ligand>
        <name>IMP</name>
        <dbReference type="ChEBI" id="CHEBI:58053"/>
        <note>ligand shared between dimeric partners</note>
    </ligand>
</feature>
<feature type="binding site" evidence="2">
    <location>
        <position position="150"/>
    </location>
    <ligand>
        <name>IMP</name>
        <dbReference type="ChEBI" id="CHEBI:58053"/>
        <note>ligand shared between dimeric partners</note>
    </ligand>
</feature>
<feature type="binding site" description="in other chain" evidence="2">
    <location>
        <position position="222"/>
    </location>
    <ligand>
        <name>IMP</name>
        <dbReference type="ChEBI" id="CHEBI:58053"/>
        <note>ligand shared between dimeric partners</note>
    </ligand>
</feature>
<feature type="binding site" description="in other chain" evidence="2">
    <location>
        <position position="237"/>
    </location>
    <ligand>
        <name>IMP</name>
        <dbReference type="ChEBI" id="CHEBI:58053"/>
        <note>ligand shared between dimeric partners</note>
    </ligand>
</feature>
<feature type="binding site" evidence="2">
    <location>
        <begin position="297"/>
        <end position="303"/>
    </location>
    <ligand>
        <name>substrate</name>
    </ligand>
</feature>
<feature type="binding site" description="in other chain" evidence="2">
    <location>
        <position position="301"/>
    </location>
    <ligand>
        <name>IMP</name>
        <dbReference type="ChEBI" id="CHEBI:58053"/>
        <note>ligand shared between dimeric partners</note>
    </ligand>
</feature>
<feature type="binding site" evidence="2">
    <location>
        <position position="303"/>
    </location>
    <ligand>
        <name>GTP</name>
        <dbReference type="ChEBI" id="CHEBI:37565"/>
    </ligand>
</feature>
<feature type="binding site" evidence="2">
    <location>
        <begin position="329"/>
        <end position="331"/>
    </location>
    <ligand>
        <name>GTP</name>
        <dbReference type="ChEBI" id="CHEBI:37565"/>
    </ligand>
</feature>
<feature type="binding site" evidence="2">
    <location>
        <begin position="413"/>
        <end position="415"/>
    </location>
    <ligand>
        <name>GTP</name>
        <dbReference type="ChEBI" id="CHEBI:37565"/>
    </ligand>
</feature>
<protein>
    <recommendedName>
        <fullName evidence="2">Adenylosuccinate synthetase</fullName>
        <shortName evidence="2">AMPSase</shortName>
        <shortName evidence="2">AdSS</shortName>
        <ecNumber evidence="2">6.3.4.4</ecNumber>
    </recommendedName>
    <alternativeName>
        <fullName evidence="2">IMP--aspartate ligase</fullName>
    </alternativeName>
</protein>
<organism>
    <name type="scientific">Schistosoma mansoni</name>
    <name type="common">Blood fluke</name>
    <dbReference type="NCBI Taxonomy" id="6183"/>
    <lineage>
        <taxon>Eukaryota</taxon>
        <taxon>Metazoa</taxon>
        <taxon>Spiralia</taxon>
        <taxon>Lophotrochozoa</taxon>
        <taxon>Platyhelminthes</taxon>
        <taxon>Trematoda</taxon>
        <taxon>Digenea</taxon>
        <taxon>Strigeidida</taxon>
        <taxon>Schistosomatoidea</taxon>
        <taxon>Schistosomatidae</taxon>
        <taxon>Schistosoma</taxon>
    </lineage>
</organism>
<name>PURA_SCHMA</name>
<evidence type="ECO:0000250" key="1"/>
<evidence type="ECO:0000255" key="2">
    <source>
        <dbReference type="HAMAP-Rule" id="MF_03125"/>
    </source>
</evidence>
<dbReference type="EC" id="6.3.4.4" evidence="2"/>
<dbReference type="EMBL" id="HE601624">
    <property type="protein sequence ID" value="CCD76606.1"/>
    <property type="molecule type" value="Genomic_DNA"/>
</dbReference>
<dbReference type="RefSeq" id="XP_018649478.1">
    <property type="nucleotide sequence ID" value="XM_018795135.1"/>
</dbReference>
<dbReference type="SMR" id="C4QCD2"/>
<dbReference type="FunCoup" id="C4QCD2">
    <property type="interactions" value="1389"/>
</dbReference>
<dbReference type="STRING" id="6183.C4QCD2"/>
<dbReference type="GeneID" id="8355040"/>
<dbReference type="KEGG" id="smm:Smp_055990"/>
<dbReference type="CTD" id="8355040"/>
<dbReference type="eggNOG" id="KOG1355">
    <property type="taxonomic scope" value="Eukaryota"/>
</dbReference>
<dbReference type="HOGENOM" id="CLU_029848_0_0_1"/>
<dbReference type="InParanoid" id="C4QCD2"/>
<dbReference type="OrthoDB" id="10265645at2759"/>
<dbReference type="PhylomeDB" id="C4QCD2"/>
<dbReference type="UniPathway" id="UPA00075">
    <property type="reaction ID" value="UER00335"/>
</dbReference>
<dbReference type="Proteomes" id="UP000008854">
    <property type="component" value="Chromosome 1"/>
</dbReference>
<dbReference type="GO" id="GO:0005737">
    <property type="term" value="C:cytoplasm"/>
    <property type="evidence" value="ECO:0007669"/>
    <property type="project" value="UniProtKB-SubCell"/>
</dbReference>
<dbReference type="GO" id="GO:0004019">
    <property type="term" value="F:adenylosuccinate synthase activity"/>
    <property type="evidence" value="ECO:0007669"/>
    <property type="project" value="UniProtKB-UniRule"/>
</dbReference>
<dbReference type="GO" id="GO:0005525">
    <property type="term" value="F:GTP binding"/>
    <property type="evidence" value="ECO:0007669"/>
    <property type="project" value="UniProtKB-UniRule"/>
</dbReference>
<dbReference type="GO" id="GO:0000287">
    <property type="term" value="F:magnesium ion binding"/>
    <property type="evidence" value="ECO:0007669"/>
    <property type="project" value="UniProtKB-UniRule"/>
</dbReference>
<dbReference type="GO" id="GO:0044208">
    <property type="term" value="P:'de novo' AMP biosynthetic process"/>
    <property type="evidence" value="ECO:0007669"/>
    <property type="project" value="UniProtKB-UniRule"/>
</dbReference>
<dbReference type="GO" id="GO:0046040">
    <property type="term" value="P:IMP metabolic process"/>
    <property type="evidence" value="ECO:0007669"/>
    <property type="project" value="TreeGrafter"/>
</dbReference>
<dbReference type="CDD" id="cd03108">
    <property type="entry name" value="AdSS"/>
    <property type="match status" value="1"/>
</dbReference>
<dbReference type="FunFam" id="3.90.170.10:FF:000001">
    <property type="entry name" value="Adenylosuccinate synthetase"/>
    <property type="match status" value="1"/>
</dbReference>
<dbReference type="FunFam" id="1.10.300.10:FF:000002">
    <property type="entry name" value="Adenylosuccinate synthetase, chloroplastic"/>
    <property type="match status" value="1"/>
</dbReference>
<dbReference type="Gene3D" id="3.40.440.10">
    <property type="entry name" value="Adenylosuccinate Synthetase, subunit A, domain 1"/>
    <property type="match status" value="1"/>
</dbReference>
<dbReference type="Gene3D" id="1.10.300.10">
    <property type="entry name" value="Adenylosuccinate Synthetase, subunit A, domain 2"/>
    <property type="match status" value="1"/>
</dbReference>
<dbReference type="Gene3D" id="3.90.170.10">
    <property type="entry name" value="Adenylosuccinate Synthetase, subunit A, domain 3"/>
    <property type="match status" value="1"/>
</dbReference>
<dbReference type="HAMAP" id="MF_00011">
    <property type="entry name" value="Adenylosucc_synth"/>
    <property type="match status" value="1"/>
</dbReference>
<dbReference type="InterPro" id="IPR018220">
    <property type="entry name" value="Adenylosuccin_syn_GTP-bd"/>
</dbReference>
<dbReference type="InterPro" id="IPR033128">
    <property type="entry name" value="Adenylosuccin_syn_Lys_AS"/>
</dbReference>
<dbReference type="InterPro" id="IPR042109">
    <property type="entry name" value="Adenylosuccinate_synth_dom1"/>
</dbReference>
<dbReference type="InterPro" id="IPR042110">
    <property type="entry name" value="Adenylosuccinate_synth_dom2"/>
</dbReference>
<dbReference type="InterPro" id="IPR042111">
    <property type="entry name" value="Adenylosuccinate_synth_dom3"/>
</dbReference>
<dbReference type="InterPro" id="IPR001114">
    <property type="entry name" value="Adenylosuccinate_synthetase"/>
</dbReference>
<dbReference type="InterPro" id="IPR027417">
    <property type="entry name" value="P-loop_NTPase"/>
</dbReference>
<dbReference type="NCBIfam" id="NF002223">
    <property type="entry name" value="PRK01117.1"/>
    <property type="match status" value="1"/>
</dbReference>
<dbReference type="NCBIfam" id="TIGR00184">
    <property type="entry name" value="purA"/>
    <property type="match status" value="1"/>
</dbReference>
<dbReference type="PANTHER" id="PTHR11846">
    <property type="entry name" value="ADENYLOSUCCINATE SYNTHETASE"/>
    <property type="match status" value="1"/>
</dbReference>
<dbReference type="PANTHER" id="PTHR11846:SF0">
    <property type="entry name" value="ADENYLOSUCCINATE SYNTHETASE"/>
    <property type="match status" value="1"/>
</dbReference>
<dbReference type="Pfam" id="PF00709">
    <property type="entry name" value="Adenylsucc_synt"/>
    <property type="match status" value="1"/>
</dbReference>
<dbReference type="SMART" id="SM00788">
    <property type="entry name" value="Adenylsucc_synt"/>
    <property type="match status" value="1"/>
</dbReference>
<dbReference type="SUPFAM" id="SSF52540">
    <property type="entry name" value="P-loop containing nucleoside triphosphate hydrolases"/>
    <property type="match status" value="1"/>
</dbReference>
<dbReference type="PROSITE" id="PS01266">
    <property type="entry name" value="ADENYLOSUCCIN_SYN_1"/>
    <property type="match status" value="1"/>
</dbReference>
<dbReference type="PROSITE" id="PS00513">
    <property type="entry name" value="ADENYLOSUCCIN_SYN_2"/>
    <property type="match status" value="1"/>
</dbReference>
<comment type="function">
    <text evidence="1">Plays an important role in the de novo pathway and in the salvage pathway of purine nucleotide biosynthesis. Catalyzes the first committed step in the biosynthesis of AMP from IMP (By similarity).</text>
</comment>
<comment type="catalytic activity">
    <reaction evidence="2">
        <text>IMP + L-aspartate + GTP = N(6)-(1,2-dicarboxyethyl)-AMP + GDP + phosphate + 2 H(+)</text>
        <dbReference type="Rhea" id="RHEA:15753"/>
        <dbReference type="ChEBI" id="CHEBI:15378"/>
        <dbReference type="ChEBI" id="CHEBI:29991"/>
        <dbReference type="ChEBI" id="CHEBI:37565"/>
        <dbReference type="ChEBI" id="CHEBI:43474"/>
        <dbReference type="ChEBI" id="CHEBI:57567"/>
        <dbReference type="ChEBI" id="CHEBI:58053"/>
        <dbReference type="ChEBI" id="CHEBI:58189"/>
        <dbReference type="EC" id="6.3.4.4"/>
    </reaction>
</comment>
<comment type="cofactor">
    <cofactor evidence="2">
        <name>Mg(2+)</name>
        <dbReference type="ChEBI" id="CHEBI:18420"/>
    </cofactor>
    <text evidence="2">Binds 1 Mg(2+) ion per subunit.</text>
</comment>
<comment type="pathway">
    <text evidence="2">Purine metabolism; AMP biosynthesis via de novo pathway; AMP from IMP: step 1/2.</text>
</comment>
<comment type="subunit">
    <text evidence="2">Homodimer.</text>
</comment>
<comment type="subcellular location">
    <subcellularLocation>
        <location evidence="2">Cytoplasm</location>
    </subcellularLocation>
</comment>
<comment type="similarity">
    <text evidence="2">Belongs to the adenylosuccinate synthetase family.</text>
</comment>
<reference key="1">
    <citation type="journal article" date="2009" name="Nature">
        <title>The genome of the blood fluke Schistosoma mansoni.</title>
        <authorList>
            <person name="Berriman M."/>
            <person name="Haas B.J."/>
            <person name="LoVerde P.T."/>
            <person name="Wilson R.A."/>
            <person name="Dillon G.P."/>
            <person name="Cerqueira G.C."/>
            <person name="Mashiyama S.T."/>
            <person name="Al-Lazikani B."/>
            <person name="Andrade L.F."/>
            <person name="Ashton P.D."/>
            <person name="Aslett M.A."/>
            <person name="Bartholomeu D.C."/>
            <person name="Blandin G."/>
            <person name="Caffrey C.R."/>
            <person name="Coghlan A."/>
            <person name="Coulson R."/>
            <person name="Day T.A."/>
            <person name="Delcher A."/>
            <person name="DeMarco R."/>
            <person name="Djikeng A."/>
            <person name="Eyre T."/>
            <person name="Gamble J.A."/>
            <person name="Ghedin E."/>
            <person name="Gu Y."/>
            <person name="Hertz-Fowler C."/>
            <person name="Hirai H."/>
            <person name="Hirai Y."/>
            <person name="Houston R."/>
            <person name="Ivens A."/>
            <person name="Johnston D.A."/>
            <person name="Lacerda D."/>
            <person name="Macedo C.D."/>
            <person name="McVeigh P."/>
            <person name="Ning Z."/>
            <person name="Oliveira G."/>
            <person name="Overington J.P."/>
            <person name="Parkhill J."/>
            <person name="Pertea M."/>
            <person name="Pierce R.J."/>
            <person name="Protasio A.V."/>
            <person name="Quail M.A."/>
            <person name="Rajandream M.A."/>
            <person name="Rogers J."/>
            <person name="Sajid M."/>
            <person name="Salzberg S.L."/>
            <person name="Stanke M."/>
            <person name="Tivey A.R."/>
            <person name="White O."/>
            <person name="Williams D.L."/>
            <person name="Wortman J."/>
            <person name="Wu W."/>
            <person name="Zamanian M."/>
            <person name="Zerlotini A."/>
            <person name="Fraser-Liggett C.M."/>
            <person name="Barrell B.G."/>
            <person name="El-Sayed N.M."/>
        </authorList>
    </citation>
    <scope>NUCLEOTIDE SEQUENCE [LARGE SCALE GENOMIC DNA]</scope>
    <source>
        <strain>Puerto Rican</strain>
    </source>
</reference>
<reference key="2">
    <citation type="journal article" date="2012" name="PLoS Negl. Trop. Dis.">
        <title>A systematically improved high quality genome and transcriptome of the human blood fluke Schistosoma mansoni.</title>
        <authorList>
            <person name="Protasio A.V."/>
            <person name="Tsai I.J."/>
            <person name="Babbage A."/>
            <person name="Nichol S."/>
            <person name="Hunt M."/>
            <person name="Aslett M.A."/>
            <person name="De Silva N."/>
            <person name="Velarde G.S."/>
            <person name="Anderson T.J."/>
            <person name="Clark R.C."/>
            <person name="Davidson C."/>
            <person name="Dillon G.P."/>
            <person name="Holroyd N.E."/>
            <person name="LoVerde P.T."/>
            <person name="Lloyd C."/>
            <person name="McQuillan J."/>
            <person name="Oliveira G."/>
            <person name="Otto T.D."/>
            <person name="Parker-Manuel S.J."/>
            <person name="Quail M.A."/>
            <person name="Wilson R.A."/>
            <person name="Zerlotini A."/>
            <person name="Dunne D.W."/>
            <person name="Berriman M."/>
        </authorList>
    </citation>
    <scope>NUCLEOTIDE SEQUENCE [LARGE SCALE GENOMIC DNA]</scope>
    <source>
        <strain>Puerto Rican</strain>
    </source>
</reference>
<keyword id="KW-0963">Cytoplasm</keyword>
<keyword id="KW-0342">GTP-binding</keyword>
<keyword id="KW-0436">Ligase</keyword>
<keyword id="KW-0460">Magnesium</keyword>
<keyword id="KW-0479">Metal-binding</keyword>
<keyword id="KW-0547">Nucleotide-binding</keyword>
<keyword id="KW-0658">Purine biosynthesis</keyword>
<keyword id="KW-1185">Reference proteome</keyword>
<proteinExistence type="inferred from homology"/>
<accession>C4QCD2</accession>
<accession>G4VB95</accession>
<gene>
    <name type="ORF">Smp_055990</name>
</gene>
<sequence>MTKSVEGLVSVVLGAQWGDEGKGKLVDLLSESCSVVCRCQGGNNAGHTVVAGGQEYFFHLLPSGIVNPNVLAVIGNGVVVNLQALFQEIDEAVCKGLLDVSSRLRISDRCHLVFDIHQEIDRMEEELRGENSLGTTKKGIGPTYSSKVTRNGLRVCDLMGDWVQFTAKYKELVKYVKRRYPKLGINVEESLEKLSGMVCDSVILINKLVKSKQANILVEGAQSCMLDIDFGTYPHVTSSNCSVGGVCTGLGLSPSRVGRVYGVIKAYTTRVGSGPFPSELLDGIGEFIQKKGCEWGVTTKRKRRIGWLDTVVIRYAHIINDFNALALTKIDVLDDLEEVKIAKAYIDPETGRELDSFPSDSSVLNHVVVVYETLPGWKTSTHGCRVYEELPTAAKVFVETVEKLLNIPIRWIGTGASRDSIIIRSV</sequence>